<keyword id="KW-0067">ATP-binding</keyword>
<keyword id="KW-0846">Cobalamin</keyword>
<keyword id="KW-0170">Cobalt</keyword>
<keyword id="KW-0215">Deoxyribonucleotide synthesis</keyword>
<keyword id="KW-1015">Disulfide bond</keyword>
<keyword id="KW-0237">DNA synthesis</keyword>
<keyword id="KW-0547">Nucleotide-binding</keyword>
<keyword id="KW-0560">Oxidoreductase</keyword>
<keyword id="KW-1185">Reference proteome</keyword>
<name>NRDZ_MYCTU</name>
<organism>
    <name type="scientific">Mycobacterium tuberculosis (strain ATCC 25618 / H37Rv)</name>
    <dbReference type="NCBI Taxonomy" id="83332"/>
    <lineage>
        <taxon>Bacteria</taxon>
        <taxon>Bacillati</taxon>
        <taxon>Actinomycetota</taxon>
        <taxon>Actinomycetes</taxon>
        <taxon>Mycobacteriales</taxon>
        <taxon>Mycobacteriaceae</taxon>
        <taxon>Mycobacterium</taxon>
        <taxon>Mycobacterium tuberculosis complex</taxon>
    </lineage>
</organism>
<protein>
    <recommendedName>
        <fullName>Vitamin B12-dependent ribonucleoside-diphosphate reductase</fullName>
        <shortName>B12-dependent RNR</shortName>
        <ecNumber>1.17.4.1</ecNumber>
    </recommendedName>
    <alternativeName>
        <fullName>Ribonucleotide reductase</fullName>
    </alternativeName>
</protein>
<dbReference type="EC" id="1.17.4.1"/>
<dbReference type="EMBL" id="AL123456">
    <property type="protein sequence ID" value="CCP43308.1"/>
    <property type="status" value="ALT_INIT"/>
    <property type="molecule type" value="Genomic_DNA"/>
</dbReference>
<dbReference type="PIR" id="A70933">
    <property type="entry name" value="A70933"/>
</dbReference>
<dbReference type="RefSeq" id="NP_215084.1">
    <property type="nucleotide sequence ID" value="NC_000962.3"/>
</dbReference>
<dbReference type="SMR" id="P9WH77"/>
<dbReference type="FunCoup" id="P9WH77">
    <property type="interactions" value="271"/>
</dbReference>
<dbReference type="STRING" id="83332.Rv0570"/>
<dbReference type="PaxDb" id="83332-Rv0570"/>
<dbReference type="GeneID" id="887666"/>
<dbReference type="KEGG" id="mtu:Rv0570"/>
<dbReference type="TubercuList" id="Rv0570"/>
<dbReference type="eggNOG" id="COG0209">
    <property type="taxonomic scope" value="Bacteria"/>
</dbReference>
<dbReference type="InParanoid" id="P9WH77"/>
<dbReference type="OrthoDB" id="9762933at2"/>
<dbReference type="Proteomes" id="UP000001584">
    <property type="component" value="Chromosome"/>
</dbReference>
<dbReference type="GO" id="GO:0005829">
    <property type="term" value="C:cytosol"/>
    <property type="evidence" value="ECO:0007005"/>
    <property type="project" value="MTBBASE"/>
</dbReference>
<dbReference type="GO" id="GO:0009274">
    <property type="term" value="C:peptidoglycan-based cell wall"/>
    <property type="evidence" value="ECO:0007005"/>
    <property type="project" value="MTBBASE"/>
</dbReference>
<dbReference type="GO" id="GO:0005886">
    <property type="term" value="C:plasma membrane"/>
    <property type="evidence" value="ECO:0007005"/>
    <property type="project" value="MTBBASE"/>
</dbReference>
<dbReference type="GO" id="GO:0005524">
    <property type="term" value="F:ATP binding"/>
    <property type="evidence" value="ECO:0007669"/>
    <property type="project" value="UniProtKB-KW"/>
</dbReference>
<dbReference type="GO" id="GO:0031419">
    <property type="term" value="F:cobalamin binding"/>
    <property type="evidence" value="ECO:0007669"/>
    <property type="project" value="UniProtKB-KW"/>
</dbReference>
<dbReference type="GO" id="GO:0004748">
    <property type="term" value="F:ribonucleoside-diphosphate reductase activity, thioredoxin disulfide as acceptor"/>
    <property type="evidence" value="ECO:0000318"/>
    <property type="project" value="GO_Central"/>
</dbReference>
<dbReference type="GO" id="GO:0009263">
    <property type="term" value="P:deoxyribonucleotide biosynthetic process"/>
    <property type="evidence" value="ECO:0007669"/>
    <property type="project" value="UniProtKB-KW"/>
</dbReference>
<dbReference type="GO" id="GO:0071897">
    <property type="term" value="P:DNA biosynthetic process"/>
    <property type="evidence" value="ECO:0007669"/>
    <property type="project" value="UniProtKB-KW"/>
</dbReference>
<dbReference type="CDD" id="cd02888">
    <property type="entry name" value="RNR_II_dimer"/>
    <property type="match status" value="1"/>
</dbReference>
<dbReference type="FunFam" id="3.20.70.20:FF:000018">
    <property type="entry name" value="Vitamin B12-dependent ribonucleotide reductase"/>
    <property type="match status" value="1"/>
</dbReference>
<dbReference type="Gene3D" id="3.20.70.20">
    <property type="match status" value="1"/>
</dbReference>
<dbReference type="InterPro" id="IPR005144">
    <property type="entry name" value="ATP-cone_dom"/>
</dbReference>
<dbReference type="InterPro" id="IPR050862">
    <property type="entry name" value="RdRp_reductase_class-2"/>
</dbReference>
<dbReference type="InterPro" id="IPR000788">
    <property type="entry name" value="RNR_lg_C"/>
</dbReference>
<dbReference type="InterPro" id="IPR013509">
    <property type="entry name" value="RNR_lsu_N"/>
</dbReference>
<dbReference type="InterPro" id="IPR013344">
    <property type="entry name" value="RNR_NrdJ/NrdZ"/>
</dbReference>
<dbReference type="InterPro" id="IPR008926">
    <property type="entry name" value="RNR_R1-su_N"/>
</dbReference>
<dbReference type="NCBIfam" id="TIGR02504">
    <property type="entry name" value="NrdJ_Z"/>
    <property type="match status" value="1"/>
</dbReference>
<dbReference type="PANTHER" id="PTHR43371:SF1">
    <property type="entry name" value="RIBONUCLEOSIDE-DIPHOSPHATE REDUCTASE"/>
    <property type="match status" value="1"/>
</dbReference>
<dbReference type="PANTHER" id="PTHR43371">
    <property type="entry name" value="VITAMIN B12-DEPENDENT RIBONUCLEOTIDE REDUCTASE"/>
    <property type="match status" value="1"/>
</dbReference>
<dbReference type="Pfam" id="PF03477">
    <property type="entry name" value="ATP-cone"/>
    <property type="match status" value="1"/>
</dbReference>
<dbReference type="Pfam" id="PF02867">
    <property type="entry name" value="Ribonuc_red_lgC"/>
    <property type="match status" value="2"/>
</dbReference>
<dbReference type="Pfam" id="PF00317">
    <property type="entry name" value="Ribonuc_red_lgN"/>
    <property type="match status" value="1"/>
</dbReference>
<dbReference type="PRINTS" id="PR01183">
    <property type="entry name" value="RIBORDTASEM1"/>
</dbReference>
<dbReference type="SUPFAM" id="SSF51998">
    <property type="entry name" value="PFL-like glycyl radical enzymes"/>
    <property type="match status" value="1"/>
</dbReference>
<dbReference type="SUPFAM" id="SSF48168">
    <property type="entry name" value="R1 subunit of ribonucleotide reductase, N-terminal domain"/>
    <property type="match status" value="1"/>
</dbReference>
<dbReference type="PROSITE" id="PS51161">
    <property type="entry name" value="ATP_CONE"/>
    <property type="match status" value="1"/>
</dbReference>
<reference key="1">
    <citation type="journal article" date="1998" name="Nature">
        <title>Deciphering the biology of Mycobacterium tuberculosis from the complete genome sequence.</title>
        <authorList>
            <person name="Cole S.T."/>
            <person name="Brosch R."/>
            <person name="Parkhill J."/>
            <person name="Garnier T."/>
            <person name="Churcher C.M."/>
            <person name="Harris D.E."/>
            <person name="Gordon S.V."/>
            <person name="Eiglmeier K."/>
            <person name="Gas S."/>
            <person name="Barry C.E. III"/>
            <person name="Tekaia F."/>
            <person name="Badcock K."/>
            <person name="Basham D."/>
            <person name="Brown D."/>
            <person name="Chillingworth T."/>
            <person name="Connor R."/>
            <person name="Davies R.M."/>
            <person name="Devlin K."/>
            <person name="Feltwell T."/>
            <person name="Gentles S."/>
            <person name="Hamlin N."/>
            <person name="Holroyd S."/>
            <person name="Hornsby T."/>
            <person name="Jagels K."/>
            <person name="Krogh A."/>
            <person name="McLean J."/>
            <person name="Moule S."/>
            <person name="Murphy L.D."/>
            <person name="Oliver S."/>
            <person name="Osborne J."/>
            <person name="Quail M.A."/>
            <person name="Rajandream M.A."/>
            <person name="Rogers J."/>
            <person name="Rutter S."/>
            <person name="Seeger K."/>
            <person name="Skelton S."/>
            <person name="Squares S."/>
            <person name="Squares R."/>
            <person name="Sulston J.E."/>
            <person name="Taylor K."/>
            <person name="Whitehead S."/>
            <person name="Barrell B.G."/>
        </authorList>
    </citation>
    <scope>NUCLEOTIDE SEQUENCE [LARGE SCALE GENOMIC DNA]</scope>
    <source>
        <strain>ATCC 25618 / H37Rv</strain>
    </source>
</reference>
<reference key="2">
    <citation type="journal article" date="2003" name="Infect. Immun.">
        <title>Ribonucleotide reduction in Mycobacterium tuberculosis: function and expression of genes encoding class Ib and class II ribonucleotide reductases.</title>
        <authorList>
            <person name="Dawes S.S."/>
            <person name="Warner D.F."/>
            <person name="Tsenova L."/>
            <person name="Timm J."/>
            <person name="McKinney J.D."/>
            <person name="Kaplan G."/>
            <person name="Rubin H."/>
            <person name="Mizrahi V."/>
        </authorList>
    </citation>
    <scope>DISRUPTION PHENOTYPE</scope>
    <source>
        <strain>ATCC 25618 / H37Rv</strain>
    </source>
</reference>
<reference key="3">
    <citation type="journal article" date="2003" name="J. Exp. Med.">
        <title>Inhibition of respiration by nitric oxide induces a Mycobacterium tuberculosis dormancy program.</title>
        <authorList>
            <person name="Voskuil M.I."/>
            <person name="Schnappinger D."/>
            <person name="Visconti K.C."/>
            <person name="Harrell M.I."/>
            <person name="Dolganov G.M."/>
            <person name="Sherman D.R."/>
            <person name="Schoolnik G.K."/>
        </authorList>
    </citation>
    <scope>INDUCTION BY NITRIC OXIDE (NO) AND BY HYPOXIA</scope>
    <scope>DORMANCY REGULON</scope>
    <source>
        <strain>ATCC 25618 / H37Rv</strain>
    </source>
</reference>
<reference key="4">
    <citation type="journal article" date="2008" name="BMC Syst. Biol.">
        <title>targetTB: a target identification pipeline for Mycobacterium tuberculosis through an interactome, reactome and genome-scale structural analysis.</title>
        <authorList>
            <person name="Raman K."/>
            <person name="Yeturu K."/>
            <person name="Chandra N."/>
        </authorList>
    </citation>
    <scope>IDENTIFICATION AS A DRUG TARGET [LARGE SCALE ANALYSIS]</scope>
</reference>
<reference key="5">
    <citation type="journal article" date="2008" name="Cell Host Microbe">
        <title>Mycobacterium tuberculosis senses host-derived carbon monoxide during macrophage infection.</title>
        <authorList>
            <person name="Shiloh M.U."/>
            <person name="Manzanillo P."/>
            <person name="Cox J.S."/>
        </authorList>
    </citation>
    <scope>INDUCTION BY CARBON MONOXIDE (CO)</scope>
    <source>
        <strain>ATCC 35801 / TMC 107 / Erdman</strain>
    </source>
</reference>
<reference key="6">
    <citation type="journal article" date="2008" name="J. Biol. Chem.">
        <title>Heme oxygenase-1-derived carbon monoxide induces the Mycobacterium tuberculosis dormancy regulon.</title>
        <authorList>
            <person name="Kumar A."/>
            <person name="Deshane J.S."/>
            <person name="Crossman D.K."/>
            <person name="Bolisetty S."/>
            <person name="Yan B.S."/>
            <person name="Kramnik I."/>
            <person name="Agarwal A."/>
            <person name="Steyn A.J."/>
        </authorList>
    </citation>
    <scope>INDUCTION BY CARBON MONOXIDE (CO)</scope>
    <scope>DORMANCY REGULON</scope>
    <source>
        <strain>ATCC 25618 / H37Rv</strain>
    </source>
</reference>
<reference key="7">
    <citation type="journal article" date="2011" name="Mol. Cell. Proteomics">
        <title>Proteogenomic analysis of Mycobacterium tuberculosis by high resolution mass spectrometry.</title>
        <authorList>
            <person name="Kelkar D.S."/>
            <person name="Kumar D."/>
            <person name="Kumar P."/>
            <person name="Balakrishnan L."/>
            <person name="Muthusamy B."/>
            <person name="Yadav A.K."/>
            <person name="Shrivastava P."/>
            <person name="Marimuthu A."/>
            <person name="Anand S."/>
            <person name="Sundaram H."/>
            <person name="Kingsbury R."/>
            <person name="Harsha H.C."/>
            <person name="Nair B."/>
            <person name="Prasad T.S."/>
            <person name="Chauhan D.S."/>
            <person name="Katoch K."/>
            <person name="Katoch V.M."/>
            <person name="Kumar P."/>
            <person name="Chaerkady R."/>
            <person name="Ramachandran S."/>
            <person name="Dash D."/>
            <person name="Pandey A."/>
        </authorList>
    </citation>
    <scope>IDENTIFICATION BY MASS SPECTROMETRY [LARGE SCALE ANALYSIS]</scope>
    <source>
        <strain>ATCC 25618 / H37Rv</strain>
    </source>
</reference>
<evidence type="ECO:0000250" key="1"/>
<evidence type="ECO:0000255" key="2">
    <source>
        <dbReference type="PROSITE-ProRule" id="PRU00492"/>
    </source>
</evidence>
<evidence type="ECO:0000269" key="3">
    <source>
    </source>
</evidence>
<evidence type="ECO:0000269" key="4">
    <source>
    </source>
</evidence>
<evidence type="ECO:0000269" key="5">
    <source>
    </source>
</evidence>
<evidence type="ECO:0000269" key="6">
    <source>
    </source>
</evidence>
<evidence type="ECO:0000305" key="7"/>
<sequence length="706" mass="76106">MPGERRRFAQATKSVGVSWPAKVRRRDGTLVPFDIARIEAAVTRAAREVACDDPDMPGTVAKAVADALGRGIAPVEDIQDCVEARLGEAGLDDVARVYIIYRQRRAELRTAKALLGVRDELKLSLAAVTVLRERYLLHDEQGRPAESTGELMDRSARCVAAAEDQYEPGSSRRWAERFATLLRNLEFLPNSPTLMNSGTDLGLLAGCFVLPIEDSLQSIFATLGQAAELQRAGGGTGYAFSHLRPAGDRVASTGGTASGPVSFLRLYDSAAGVVSMGGRRRGACMAVLDVSHPDICDFVTAKAESPSELPHFNLSVGVTDAFLRAVERNGLHRLVNPRTGKIVARMPAAELFDAICKAAHAGGDPGLVFLDTINRANPVPGRGRIEATNPCGEVPLLPYESCNLGSINLARMLADGRVDWDRLEEVAGVAVRFLDDVIDVSRYPFPELGEAARATRKIGLGVMGLAELLAALGIPYDSEEAVRLATRLMRRIQQAAHTASRRLAEERGAFPAFTDSRFARSGPRRNAQVTSVAPTGTISLIAGTTAGIEPMFAIAFTRAIVGRHLLEVNPCFDRLARDRGFYRDELIAEIAQRGGVRGYPRLPAEVRAAFPTAAEIAPQWHLRMQAAVQRHVEAAVSKTVNLPATATVDDVRAIYVAAWKAKVKGITVYRYGSREGQVLSYAAPKPLLAQADTEFSGGCAGRSCEF</sequence>
<comment type="function">
    <text evidence="1">Provides the precursors necessary for DNA synthesis. Catalyzes the biosynthesis of deoxyribonucleotides from the corresponding ribonucleotides (By similarity).</text>
</comment>
<comment type="catalytic activity">
    <reaction>
        <text>a 2'-deoxyribonucleoside 5'-diphosphate + [thioredoxin]-disulfide + H2O = a ribonucleoside 5'-diphosphate + [thioredoxin]-dithiol</text>
        <dbReference type="Rhea" id="RHEA:23252"/>
        <dbReference type="Rhea" id="RHEA-COMP:10698"/>
        <dbReference type="Rhea" id="RHEA-COMP:10700"/>
        <dbReference type="ChEBI" id="CHEBI:15377"/>
        <dbReference type="ChEBI" id="CHEBI:29950"/>
        <dbReference type="ChEBI" id="CHEBI:50058"/>
        <dbReference type="ChEBI" id="CHEBI:57930"/>
        <dbReference type="ChEBI" id="CHEBI:73316"/>
        <dbReference type="EC" id="1.17.4.1"/>
    </reaction>
</comment>
<comment type="cofactor">
    <cofactor evidence="1">
        <name>adenosylcob(III)alamin</name>
        <dbReference type="ChEBI" id="CHEBI:18408"/>
    </cofactor>
    <text evidence="1">5'-deoxyadenosylcobalamine (coenzyme B12).</text>
</comment>
<comment type="induction">
    <text evidence="3 5 6">A member of the dormancy regulon. Induced in response to reduced oxygen tension (hypoxia), low levels of nitric oxide (NO) and carbon monoxide (CO). It is hoped that this regulon will give insight into the latent, or dormant phase of infection.</text>
</comment>
<comment type="disruption phenotype">
    <text evidence="4">No visible phenotype, even under low-oxygen growth conditions, nor in aerosol-infected B6D2/F1 mice.</text>
</comment>
<comment type="miscellaneous">
    <text>Was identified as a high-confidence drug target.</text>
</comment>
<comment type="similarity">
    <text evidence="7">Belongs to the ribonucleoside diphosphate reductase class-2 family.</text>
</comment>
<comment type="sequence caution">
    <conflict type="erroneous initiation">
        <sequence resource="EMBL-CDS" id="CCP43308"/>
    </conflict>
    <text>Truncated N-terminus.</text>
</comment>
<feature type="chain" id="PRO_0000392684" description="Vitamin B12-dependent ribonucleoside-diphosphate reductase">
    <location>
        <begin position="1"/>
        <end position="706"/>
    </location>
</feature>
<feature type="domain" description="ATP-cone" evidence="2">
    <location>
        <begin position="21"/>
        <end position="109"/>
    </location>
</feature>
<feature type="active site" description="Proton acceptor" evidence="1">
    <location>
        <position position="389"/>
    </location>
</feature>
<feature type="active site" description="Cysteine radical intermediate" evidence="1">
    <location>
        <position position="391"/>
    </location>
</feature>
<feature type="active site" description="Proton acceptor" evidence="1">
    <location>
        <position position="393"/>
    </location>
</feature>
<feature type="binding site" evidence="1">
    <location>
        <position position="191"/>
    </location>
    <ligand>
        <name>substrate</name>
    </ligand>
</feature>
<feature type="binding site" evidence="1">
    <location>
        <begin position="206"/>
        <end position="207"/>
    </location>
    <ligand>
        <name>substrate</name>
    </ligand>
</feature>
<feature type="binding site" evidence="1">
    <location>
        <position position="235"/>
    </location>
    <ligand>
        <name>substrate</name>
    </ligand>
</feature>
<feature type="binding site" evidence="1">
    <location>
        <begin position="389"/>
        <end position="393"/>
    </location>
    <ligand>
        <name>substrate</name>
    </ligand>
</feature>
<feature type="binding site" evidence="1">
    <location>
        <begin position="534"/>
        <end position="538"/>
    </location>
    <ligand>
        <name>substrate</name>
    </ligand>
</feature>
<feature type="disulfide bond" description="Redox-active" evidence="1">
    <location>
        <begin position="207"/>
        <end position="402"/>
    </location>
</feature>
<proteinExistence type="evidence at protein level"/>
<accession>P9WH77</accession>
<accession>L0T6W6</accession>
<accession>O53767</accession>
<accession>Q8VKI9</accession>
<gene>
    <name type="primary">nrdZ</name>
    <name type="ordered locus">Rv0570</name>
</gene>